<evidence type="ECO:0000250" key="1"/>
<evidence type="ECO:0000255" key="2"/>
<evidence type="ECO:0000269" key="3">
    <source>
    </source>
</evidence>
<evidence type="ECO:0000269" key="4">
    <source>
    </source>
</evidence>
<evidence type="ECO:0000305" key="5"/>
<accession>Q9QUP4</accession>
<gene>
    <name type="primary">Chst5</name>
    <name type="synonym">Gst4</name>
</gene>
<sequence>MRLPRFSSTVMLSLLMVQTGILVFLVSRQVPSSPAGLGERVHVLVLSSWRSGSSFVGQLFSQHPDVFYLMEPAWHVWDTLSQGSAPALHMAVRDLIRSVFLCDMDVFDAYLPWRRNISDLFQWAVSRALCSPPVCEAFARGNISSEEVCKPLCATRPFGLAQEACSSYSHVVLKEVRFFNLQVLYPLLSDPALNLRIVHLVRDPRAVLRSREQTAKALARDNGIVLGTNGTWVEADPRLRVVNEVCRSHVRIAEAALHKPPPFLQDRYRLVRYEDLARDPLTVIRELYAFTGLGLTPQLQTWIHNITHGSGPGARREAFKTTSRDALSVSQAWRHTLPFAKIRRVQELCGGALQLLGYRSVHSELEQRDLSLDLLLPRGMDSFKWASSTEKQPES</sequence>
<protein>
    <recommendedName>
        <fullName>Carbohydrate sulfotransferase 5</fullName>
        <ecNumber>2.8.2.-</ecNumber>
    </recommendedName>
    <alternativeName>
        <fullName>Galactose/N-acetylglucosamine/N-acetylglucosamine 6-O-sulfotransferase 4</fullName>
        <shortName>GST4</shortName>
    </alternativeName>
    <alternativeName>
        <fullName>Intestinal N-acetylglucosamine-6-O-sulfotransferase</fullName>
        <shortName>I-GlcNAc6ST</shortName>
        <shortName>Intestinal GlcNAc-6-sulfotransferase</shortName>
        <shortName>mIGn6ST</shortName>
    </alternativeName>
    <alternativeName>
        <fullName>N-acetylglucosamine 6-O-sulfotransferase 3</fullName>
        <shortName>GlcNAc6ST-3</shortName>
        <shortName>Gn6st-3</shortName>
    </alternativeName>
</protein>
<reference key="1">
    <citation type="journal article" date="1999" name="Biochem. Biophys. Res. Commun.">
        <title>Cloning and characterization of a mammalian N-acetylglucosamine-6-sulfotransferase that is highly restricted to intestinal tissue.</title>
        <authorList>
            <person name="Lee J.K."/>
            <person name="Bhakta S."/>
            <person name="Rosen S.D."/>
            <person name="Hemmerich S."/>
        </authorList>
    </citation>
    <scope>NUCLEOTIDE SEQUENCE [GENOMIC DNA / MRNA]</scope>
    <source>
        <strain>C57BL/6J</strain>
        <tissue>Intestine</tissue>
    </source>
</reference>
<reference key="2">
    <citation type="journal article" date="2001" name="J. Biol. Chem.">
        <title>Human corneal GlcNAc 6-O-sulfotransferase and mouse intestinal GlcNAc 6-O-sulfotransferase both produce keratan sulfate.</title>
        <authorList>
            <person name="Akama T.O."/>
            <person name="Nakayama J."/>
            <person name="Nishida K."/>
            <person name="Hiraoka N."/>
            <person name="Suzuki M."/>
            <person name="McAuliffe J."/>
            <person name="Hindsgaul O."/>
            <person name="Fukuda M."/>
            <person name="Fukuda M.N."/>
        </authorList>
    </citation>
    <scope>TISSUE SPECIFICITY</scope>
    <scope>SUBSTRATE SPECIFICITY</scope>
</reference>
<reference key="3">
    <citation type="journal article" date="2002" name="J. Biol. Chem.">
        <title>Enzymatic synthesis in vitro of the disulfated disaccharide unit of corneal keratan sulfate.</title>
        <authorList>
            <person name="Akama T.O."/>
            <person name="Misra A.K."/>
            <person name="Hindsgaul O."/>
            <person name="Fukuda M.N."/>
        </authorList>
    </citation>
    <scope>FUNCTION</scope>
    <scope>SUBSTRATE SPECIFICITY</scope>
</reference>
<organism>
    <name type="scientific">Mus musculus</name>
    <name type="common">Mouse</name>
    <dbReference type="NCBI Taxonomy" id="10090"/>
    <lineage>
        <taxon>Eukaryota</taxon>
        <taxon>Metazoa</taxon>
        <taxon>Chordata</taxon>
        <taxon>Craniata</taxon>
        <taxon>Vertebrata</taxon>
        <taxon>Euteleostomi</taxon>
        <taxon>Mammalia</taxon>
        <taxon>Eutheria</taxon>
        <taxon>Euarchontoglires</taxon>
        <taxon>Glires</taxon>
        <taxon>Rodentia</taxon>
        <taxon>Myomorpha</taxon>
        <taxon>Muroidea</taxon>
        <taxon>Muridae</taxon>
        <taxon>Murinae</taxon>
        <taxon>Mus</taxon>
        <taxon>Mus</taxon>
    </lineage>
</organism>
<proteinExistence type="evidence at transcript level"/>
<keyword id="KW-0119">Carbohydrate metabolism</keyword>
<keyword id="KW-0325">Glycoprotein</keyword>
<keyword id="KW-0333">Golgi apparatus</keyword>
<keyword id="KW-0472">Membrane</keyword>
<keyword id="KW-1185">Reference proteome</keyword>
<keyword id="KW-0735">Signal-anchor</keyword>
<keyword id="KW-0808">Transferase</keyword>
<keyword id="KW-0812">Transmembrane</keyword>
<keyword id="KW-1133">Transmembrane helix</keyword>
<comment type="function">
    <text evidence="4">Sulfotransferase that utilizes 3'-phospho-5'-adenylyl sulfate (PAPS) as sulfonate donor to catalyze the transfer of sulfate to position 6 of non-reducing N-acetylglucosamine (GlcNAc) residues of keratan. Mediates sulfation of keratan in cornea. Keratan sulfate plays a central role in maintaining corneal transparency. Acts on the non-reducing terminal GlcNAc of short and long carbohydrate substrates that have poly-N-acetyllactosamine structures. May also have activity toward O-linked sugars of mucin-type acceptors.</text>
</comment>
<comment type="subcellular location">
    <subcellularLocation>
        <location evidence="1">Golgi apparatus membrane</location>
        <topology evidence="1">Single-pass type II membrane protein</topology>
    </subcellularLocation>
    <text evidence="1">Golgi membrane, early secretory pathway.</text>
</comment>
<comment type="tissue specificity">
    <text evidence="3">Expressed in cornea.</text>
</comment>
<comment type="miscellaneous">
    <text>In human, there are 2 related proteins, CHST5 and CHST6, the latter mediating sulfation of keratan in cornea. In mouse however, there is no CHST6 protein, CHST5 functioning as a corneal keratan sulfotransferase and mediates such function.</text>
</comment>
<comment type="similarity">
    <text evidence="5">Belongs to the sulfotransferase 1 family. Gal/GlcNAc/GalNAc subfamily.</text>
</comment>
<name>CHST5_MOUSE</name>
<feature type="chain" id="PRO_0000085196" description="Carbohydrate sulfotransferase 5">
    <location>
        <begin position="1"/>
        <end position="395"/>
    </location>
</feature>
<feature type="topological domain" description="Cytoplasmic" evidence="2">
    <location>
        <begin position="1"/>
        <end position="7"/>
    </location>
</feature>
<feature type="transmembrane region" description="Helical; Signal-anchor for type II membrane protein" evidence="2">
    <location>
        <begin position="8"/>
        <end position="26"/>
    </location>
</feature>
<feature type="topological domain" description="Lumenal" evidence="2">
    <location>
        <begin position="27"/>
        <end position="395"/>
    </location>
</feature>
<feature type="binding site" evidence="1">
    <location>
        <begin position="49"/>
        <end position="55"/>
    </location>
    <ligand>
        <name>3'-phosphoadenylyl sulfate</name>
        <dbReference type="ChEBI" id="CHEBI:58339"/>
    </ligand>
</feature>
<feature type="binding site" evidence="1">
    <location>
        <begin position="202"/>
        <end position="210"/>
    </location>
    <ligand>
        <name>3'-phosphoadenylyl sulfate</name>
        <dbReference type="ChEBI" id="CHEBI:58339"/>
    </ligand>
</feature>
<feature type="glycosylation site" description="N-linked (GlcNAc...) asparagine" evidence="2">
    <location>
        <position position="116"/>
    </location>
</feature>
<feature type="glycosylation site" description="N-linked (GlcNAc...) asparagine" evidence="2">
    <location>
        <position position="142"/>
    </location>
</feature>
<feature type="glycosylation site" description="N-linked (GlcNAc...) asparagine" evidence="2">
    <location>
        <position position="229"/>
    </location>
</feature>
<feature type="glycosylation site" description="N-linked (GlcNAc...) asparagine" evidence="2">
    <location>
        <position position="305"/>
    </location>
</feature>
<dbReference type="EC" id="2.8.2.-"/>
<dbReference type="EMBL" id="AF176840">
    <property type="protein sequence ID" value="AAD56002.1"/>
    <property type="molecule type" value="mRNA"/>
</dbReference>
<dbReference type="EMBL" id="AF176841">
    <property type="protein sequence ID" value="AAD56003.1"/>
    <property type="molecule type" value="Genomic_DNA"/>
</dbReference>
<dbReference type="CCDS" id="CCDS22682.1"/>
<dbReference type="RefSeq" id="NP_064334.1">
    <property type="nucleotide sequence ID" value="NM_019950.2"/>
</dbReference>
<dbReference type="FunCoup" id="Q9QUP4">
    <property type="interactions" value="372"/>
</dbReference>
<dbReference type="STRING" id="10090.ENSMUSP00000034430"/>
<dbReference type="GlyCosmos" id="Q9QUP4">
    <property type="glycosylation" value="4 sites, No reported glycans"/>
</dbReference>
<dbReference type="GlyGen" id="Q9QUP4">
    <property type="glycosylation" value="4 sites"/>
</dbReference>
<dbReference type="iPTMnet" id="Q9QUP4"/>
<dbReference type="PhosphoSitePlus" id="Q9QUP4"/>
<dbReference type="PaxDb" id="10090-ENSMUSP00000034430"/>
<dbReference type="ProteomicsDB" id="281675"/>
<dbReference type="DNASU" id="56773"/>
<dbReference type="Ensembl" id="ENSMUST00000034430.6">
    <property type="protein sequence ID" value="ENSMUSP00000034430.5"/>
    <property type="gene ID" value="ENSMUSG00000031952.6"/>
</dbReference>
<dbReference type="GeneID" id="56773"/>
<dbReference type="KEGG" id="mmu:56773"/>
<dbReference type="UCSC" id="uc009nmz.1">
    <property type="organism name" value="mouse"/>
</dbReference>
<dbReference type="AGR" id="MGI:1931825"/>
<dbReference type="CTD" id="23563"/>
<dbReference type="MGI" id="MGI:1931825">
    <property type="gene designation" value="Chst5"/>
</dbReference>
<dbReference type="VEuPathDB" id="HostDB:ENSMUSG00000031952"/>
<dbReference type="eggNOG" id="ENOG502QQMD">
    <property type="taxonomic scope" value="Eukaryota"/>
</dbReference>
<dbReference type="GeneTree" id="ENSGT00940000162986"/>
<dbReference type="HOGENOM" id="CLU_028381_3_1_1"/>
<dbReference type="InParanoid" id="Q9QUP4"/>
<dbReference type="OMA" id="RDPLMEI"/>
<dbReference type="OrthoDB" id="6138663at2759"/>
<dbReference type="PhylomeDB" id="Q9QUP4"/>
<dbReference type="TreeFam" id="TF342871"/>
<dbReference type="BRENDA" id="2.8.2.21">
    <property type="organism ID" value="3474"/>
</dbReference>
<dbReference type="Reactome" id="R-MMU-2022854">
    <property type="pathway name" value="Keratan sulfate biosynthesis"/>
</dbReference>
<dbReference type="BioGRID-ORCS" id="56773">
    <property type="hits" value="4 hits in 79 CRISPR screens"/>
</dbReference>
<dbReference type="ChiTaRS" id="Chst5">
    <property type="organism name" value="mouse"/>
</dbReference>
<dbReference type="PRO" id="PR:Q9QUP4"/>
<dbReference type="Proteomes" id="UP000000589">
    <property type="component" value="Chromosome 8"/>
</dbReference>
<dbReference type="RNAct" id="Q9QUP4">
    <property type="molecule type" value="protein"/>
</dbReference>
<dbReference type="Bgee" id="ENSMUSG00000031952">
    <property type="expression patterns" value="Expressed in vestibular epithelium and 84 other cell types or tissues"/>
</dbReference>
<dbReference type="GO" id="GO:0000139">
    <property type="term" value="C:Golgi membrane"/>
    <property type="evidence" value="ECO:0007669"/>
    <property type="project" value="UniProtKB-SubCell"/>
</dbReference>
<dbReference type="GO" id="GO:0001517">
    <property type="term" value="F:N-acetylglucosamine 6-O-sulfotransferase activity"/>
    <property type="evidence" value="ECO:0000314"/>
    <property type="project" value="UniProtKB"/>
</dbReference>
<dbReference type="GO" id="GO:0005975">
    <property type="term" value="P:carbohydrate metabolic process"/>
    <property type="evidence" value="ECO:0007669"/>
    <property type="project" value="InterPro"/>
</dbReference>
<dbReference type="GO" id="GO:0018146">
    <property type="term" value="P:keratan sulfate proteoglycan biosynthetic process"/>
    <property type="evidence" value="ECO:0000314"/>
    <property type="project" value="UniProtKB"/>
</dbReference>
<dbReference type="GO" id="GO:0006044">
    <property type="term" value="P:N-acetylglucosamine metabolic process"/>
    <property type="evidence" value="ECO:0000314"/>
    <property type="project" value="UniProtKB"/>
</dbReference>
<dbReference type="GO" id="GO:0006790">
    <property type="term" value="P:sulfur compound metabolic process"/>
    <property type="evidence" value="ECO:0000314"/>
    <property type="project" value="UniProtKB"/>
</dbReference>
<dbReference type="FunFam" id="3.40.50.300:FF:000703">
    <property type="entry name" value="Sulfotransferase"/>
    <property type="match status" value="1"/>
</dbReference>
<dbReference type="Gene3D" id="3.40.50.300">
    <property type="entry name" value="P-loop containing nucleotide triphosphate hydrolases"/>
    <property type="match status" value="1"/>
</dbReference>
<dbReference type="InterPro" id="IPR016469">
    <property type="entry name" value="Carbohydrate_sulfotransferase"/>
</dbReference>
<dbReference type="InterPro" id="IPR051135">
    <property type="entry name" value="Gal/GlcNAc/GalNAc_ST"/>
</dbReference>
<dbReference type="InterPro" id="IPR027417">
    <property type="entry name" value="P-loop_NTPase"/>
</dbReference>
<dbReference type="PANTHER" id="PTHR10704">
    <property type="entry name" value="CARBOHYDRATE SULFOTRANSFERASE"/>
    <property type="match status" value="1"/>
</dbReference>
<dbReference type="PANTHER" id="PTHR10704:SF4">
    <property type="entry name" value="CARBOHYDRATE SULFOTRANSFERASE 6"/>
    <property type="match status" value="1"/>
</dbReference>
<dbReference type="Pfam" id="PF13469">
    <property type="entry name" value="Sulfotransfer_3"/>
    <property type="match status" value="1"/>
</dbReference>
<dbReference type="PIRSF" id="PIRSF005883">
    <property type="entry name" value="Carbohydrate_sulfotransferase"/>
    <property type="match status" value="1"/>
</dbReference>
<dbReference type="SUPFAM" id="SSF52540">
    <property type="entry name" value="P-loop containing nucleoside triphosphate hydrolases"/>
    <property type="match status" value="1"/>
</dbReference>